<protein>
    <recommendedName>
        <fullName evidence="1">Large ribosomal subunit protein uL15</fullName>
    </recommendedName>
    <alternativeName>
        <fullName evidence="3">50S ribosomal protein L15</fullName>
    </alternativeName>
</protein>
<name>RL15_METJA</name>
<sequence>MIRKKKKVKKIRGSRTCGGGSHKKRRGAGNKGGRGMAGGHKHKWTWIIKYCPDYFGKYGFKRHPSLVKRLETINVGELEEIVLKNPDKFEKEDDKFVVDVIELGYEKVLGKGKVTIPMIVKAVEVSEKAREKIEAVGGEVVEL</sequence>
<keyword id="KW-1185">Reference proteome</keyword>
<keyword id="KW-0687">Ribonucleoprotein</keyword>
<keyword id="KW-0689">Ribosomal protein</keyword>
<keyword id="KW-0694">RNA-binding</keyword>
<keyword id="KW-0699">rRNA-binding</keyword>
<gene>
    <name evidence="1" type="primary">rpl15</name>
    <name type="ordered locus">MJ0477</name>
</gene>
<accession>P54047</accession>
<feature type="chain" id="PRO_0000104863" description="Large ribosomal subunit protein uL15">
    <location>
        <begin position="1"/>
        <end position="143"/>
    </location>
</feature>
<feature type="region of interest" description="Disordered" evidence="2">
    <location>
        <begin position="1"/>
        <end position="39"/>
    </location>
</feature>
<feature type="compositionally biased region" description="Basic residues" evidence="2">
    <location>
        <begin position="1"/>
        <end position="13"/>
    </location>
</feature>
<feature type="compositionally biased region" description="Gly residues" evidence="2">
    <location>
        <begin position="29"/>
        <end position="38"/>
    </location>
</feature>
<organism>
    <name type="scientific">Methanocaldococcus jannaschii (strain ATCC 43067 / DSM 2661 / JAL-1 / JCM 10045 / NBRC 100440)</name>
    <name type="common">Methanococcus jannaschii</name>
    <dbReference type="NCBI Taxonomy" id="243232"/>
    <lineage>
        <taxon>Archaea</taxon>
        <taxon>Methanobacteriati</taxon>
        <taxon>Methanobacteriota</taxon>
        <taxon>Methanomada group</taxon>
        <taxon>Methanococci</taxon>
        <taxon>Methanococcales</taxon>
        <taxon>Methanocaldococcaceae</taxon>
        <taxon>Methanocaldococcus</taxon>
    </lineage>
</organism>
<comment type="function">
    <text evidence="1">Binds to the 23S rRNA.</text>
</comment>
<comment type="subunit">
    <text evidence="1">Part of the 50S ribosomal subunit.</text>
</comment>
<comment type="similarity">
    <text evidence="1">Belongs to the universal ribosomal protein uL15 family.</text>
</comment>
<reference key="1">
    <citation type="journal article" date="1996" name="Science">
        <title>Complete genome sequence of the methanogenic archaeon, Methanococcus jannaschii.</title>
        <authorList>
            <person name="Bult C.J."/>
            <person name="White O."/>
            <person name="Olsen G.J."/>
            <person name="Zhou L."/>
            <person name="Fleischmann R.D."/>
            <person name="Sutton G.G."/>
            <person name="Blake J.A."/>
            <person name="FitzGerald L.M."/>
            <person name="Clayton R.A."/>
            <person name="Gocayne J.D."/>
            <person name="Kerlavage A.R."/>
            <person name="Dougherty B.A."/>
            <person name="Tomb J.-F."/>
            <person name="Adams M.D."/>
            <person name="Reich C.I."/>
            <person name="Overbeek R."/>
            <person name="Kirkness E.F."/>
            <person name="Weinstock K.G."/>
            <person name="Merrick J.M."/>
            <person name="Glodek A."/>
            <person name="Scott J.L."/>
            <person name="Geoghagen N.S.M."/>
            <person name="Weidman J.F."/>
            <person name="Fuhrmann J.L."/>
            <person name="Nguyen D."/>
            <person name="Utterback T.R."/>
            <person name="Kelley J.M."/>
            <person name="Peterson J.D."/>
            <person name="Sadow P.W."/>
            <person name="Hanna M.C."/>
            <person name="Cotton M.D."/>
            <person name="Roberts K.M."/>
            <person name="Hurst M.A."/>
            <person name="Kaine B.P."/>
            <person name="Borodovsky M."/>
            <person name="Klenk H.-P."/>
            <person name="Fraser C.M."/>
            <person name="Smith H.O."/>
            <person name="Woese C.R."/>
            <person name="Venter J.C."/>
        </authorList>
    </citation>
    <scope>NUCLEOTIDE SEQUENCE [LARGE SCALE GENOMIC DNA]</scope>
    <source>
        <strain>ATCC 43067 / DSM 2661 / JAL-1 / JCM 10045 / NBRC 100440</strain>
    </source>
</reference>
<proteinExistence type="inferred from homology"/>
<dbReference type="EMBL" id="L77117">
    <property type="protein sequence ID" value="AAB98466.1"/>
    <property type="molecule type" value="Genomic_DNA"/>
</dbReference>
<dbReference type="PIR" id="E64359">
    <property type="entry name" value="E64359"/>
</dbReference>
<dbReference type="RefSeq" id="WP_010869978.1">
    <property type="nucleotide sequence ID" value="NC_000909.1"/>
</dbReference>
<dbReference type="SMR" id="P54047"/>
<dbReference type="FunCoup" id="P54047">
    <property type="interactions" value="157"/>
</dbReference>
<dbReference type="STRING" id="243232.MJ_0477"/>
<dbReference type="PaxDb" id="243232-MJ_0477"/>
<dbReference type="EnsemblBacteria" id="AAB98466">
    <property type="protein sequence ID" value="AAB98466"/>
    <property type="gene ID" value="MJ_0477"/>
</dbReference>
<dbReference type="GeneID" id="1451339"/>
<dbReference type="KEGG" id="mja:MJ_0477"/>
<dbReference type="eggNOG" id="arCOG00779">
    <property type="taxonomic scope" value="Archaea"/>
</dbReference>
<dbReference type="HOGENOM" id="CLU_109163_0_0_2"/>
<dbReference type="InParanoid" id="P54047"/>
<dbReference type="OrthoDB" id="9418at2157"/>
<dbReference type="PhylomeDB" id="P54047"/>
<dbReference type="Proteomes" id="UP000000805">
    <property type="component" value="Chromosome"/>
</dbReference>
<dbReference type="GO" id="GO:0015934">
    <property type="term" value="C:large ribosomal subunit"/>
    <property type="evidence" value="ECO:0007669"/>
    <property type="project" value="InterPro"/>
</dbReference>
<dbReference type="GO" id="GO:0019843">
    <property type="term" value="F:rRNA binding"/>
    <property type="evidence" value="ECO:0007669"/>
    <property type="project" value="UniProtKB-UniRule"/>
</dbReference>
<dbReference type="GO" id="GO:0003735">
    <property type="term" value="F:structural constituent of ribosome"/>
    <property type="evidence" value="ECO:0000318"/>
    <property type="project" value="GO_Central"/>
</dbReference>
<dbReference type="GO" id="GO:0006412">
    <property type="term" value="P:translation"/>
    <property type="evidence" value="ECO:0007669"/>
    <property type="project" value="UniProtKB-UniRule"/>
</dbReference>
<dbReference type="FunFam" id="3.100.10.10:FF:000021">
    <property type="entry name" value="50S ribosomal protein L15"/>
    <property type="match status" value="1"/>
</dbReference>
<dbReference type="FunFam" id="4.10.990.10:FF:000001">
    <property type="entry name" value="50S ribosomal protein L15"/>
    <property type="match status" value="1"/>
</dbReference>
<dbReference type="Gene3D" id="3.100.10.10">
    <property type="match status" value="1"/>
</dbReference>
<dbReference type="Gene3D" id="4.10.990.10">
    <property type="match status" value="1"/>
</dbReference>
<dbReference type="HAMAP" id="MF_01341">
    <property type="entry name" value="Ribosomal_uL15"/>
    <property type="match status" value="1"/>
</dbReference>
<dbReference type="InterPro" id="IPR027386">
    <property type="entry name" value="Rbsml_uL15_N"/>
</dbReference>
<dbReference type="InterPro" id="IPR030878">
    <property type="entry name" value="Ribosomal_uL15"/>
</dbReference>
<dbReference type="InterPro" id="IPR021131">
    <property type="entry name" value="Ribosomal_uL15/eL18"/>
</dbReference>
<dbReference type="InterPro" id="IPR036227">
    <property type="entry name" value="Ribosomal_uL15/eL18_sf"/>
</dbReference>
<dbReference type="InterPro" id="IPR001196">
    <property type="entry name" value="Ribosomal_uL15_CS"/>
</dbReference>
<dbReference type="PANTHER" id="PTHR11721">
    <property type="entry name" value="60S RIBOSOMAL PROTEIN L27A"/>
    <property type="match status" value="1"/>
</dbReference>
<dbReference type="PANTHER" id="PTHR11721:SF3">
    <property type="entry name" value="LARGE RIBOSOMAL SUBUNIT PROTEIN UL15"/>
    <property type="match status" value="1"/>
</dbReference>
<dbReference type="Pfam" id="PF00828">
    <property type="entry name" value="Ribosomal_L27A"/>
    <property type="match status" value="1"/>
</dbReference>
<dbReference type="SUPFAM" id="SSF52080">
    <property type="entry name" value="Ribosomal proteins L15p and L18e"/>
    <property type="match status" value="1"/>
</dbReference>
<dbReference type="PROSITE" id="PS00475">
    <property type="entry name" value="RIBOSOMAL_L15"/>
    <property type="match status" value="1"/>
</dbReference>
<evidence type="ECO:0000255" key="1">
    <source>
        <dbReference type="HAMAP-Rule" id="MF_01341"/>
    </source>
</evidence>
<evidence type="ECO:0000256" key="2">
    <source>
        <dbReference type="SAM" id="MobiDB-lite"/>
    </source>
</evidence>
<evidence type="ECO:0000305" key="3"/>